<organism>
    <name type="scientific">Laticauda laticaudata</name>
    <name type="common">Blue-ringed sea krait</name>
    <name type="synonym">Blue-lipped sea krait</name>
    <dbReference type="NCBI Taxonomy" id="8630"/>
    <lineage>
        <taxon>Eukaryota</taxon>
        <taxon>Metazoa</taxon>
        <taxon>Chordata</taxon>
        <taxon>Craniata</taxon>
        <taxon>Vertebrata</taxon>
        <taxon>Euteleostomi</taxon>
        <taxon>Lepidosauria</taxon>
        <taxon>Squamata</taxon>
        <taxon>Bifurcata</taxon>
        <taxon>Unidentata</taxon>
        <taxon>Episquamata</taxon>
        <taxon>Toxicofera</taxon>
        <taxon>Serpentes</taxon>
        <taxon>Colubroidea</taxon>
        <taxon>Elapidae</taxon>
        <taxon>Laticaudinae</taxon>
        <taxon>Laticauda</taxon>
    </lineage>
</organism>
<proteinExistence type="inferred from homology"/>
<dbReference type="EMBL" id="AB017955">
    <property type="protein sequence ID" value="BAA75775.1"/>
    <property type="molecule type" value="mRNA"/>
</dbReference>
<dbReference type="SMR" id="Q9YGW9"/>
<dbReference type="Proteomes" id="UP000694406">
    <property type="component" value="Unplaced"/>
</dbReference>
<dbReference type="GO" id="GO:0005576">
    <property type="term" value="C:extracellular region"/>
    <property type="evidence" value="ECO:0007669"/>
    <property type="project" value="UniProtKB-SubCell"/>
</dbReference>
<dbReference type="GO" id="GO:0030550">
    <property type="term" value="F:acetylcholine receptor inhibitor activity"/>
    <property type="evidence" value="ECO:0007669"/>
    <property type="project" value="UniProtKB-KW"/>
</dbReference>
<dbReference type="GO" id="GO:0099106">
    <property type="term" value="F:ion channel regulator activity"/>
    <property type="evidence" value="ECO:0007669"/>
    <property type="project" value="UniProtKB-KW"/>
</dbReference>
<dbReference type="GO" id="GO:0090729">
    <property type="term" value="F:toxin activity"/>
    <property type="evidence" value="ECO:0007669"/>
    <property type="project" value="UniProtKB-KW"/>
</dbReference>
<dbReference type="CDD" id="cd00206">
    <property type="entry name" value="TFP_snake_toxin"/>
    <property type="match status" value="1"/>
</dbReference>
<dbReference type="FunFam" id="2.10.60.10:FF:000024">
    <property type="entry name" value="Cytotoxin 1"/>
    <property type="match status" value="1"/>
</dbReference>
<dbReference type="Gene3D" id="2.10.60.10">
    <property type="entry name" value="CD59"/>
    <property type="match status" value="1"/>
</dbReference>
<dbReference type="InterPro" id="IPR003571">
    <property type="entry name" value="Snake_3FTx"/>
</dbReference>
<dbReference type="InterPro" id="IPR045860">
    <property type="entry name" value="Snake_toxin-like_sf"/>
</dbReference>
<dbReference type="InterPro" id="IPR018354">
    <property type="entry name" value="Snake_toxin_con_site"/>
</dbReference>
<dbReference type="InterPro" id="IPR054131">
    <property type="entry name" value="Toxin_cobra-type"/>
</dbReference>
<dbReference type="Pfam" id="PF21947">
    <property type="entry name" value="Toxin_cobra-type"/>
    <property type="match status" value="1"/>
</dbReference>
<dbReference type="SUPFAM" id="SSF57302">
    <property type="entry name" value="Snake toxin-like"/>
    <property type="match status" value="1"/>
</dbReference>
<dbReference type="PROSITE" id="PS00272">
    <property type="entry name" value="SNAKE_TOXIN"/>
    <property type="match status" value="1"/>
</dbReference>
<accession>Q9YGW9</accession>
<comment type="function">
    <text evidence="3">Binds to muscle nicotinic acetylcholine receptor (nAChR) and inhibit acetylcholine from binding to the receptor, thereby impairing neuromuscular transmission.</text>
</comment>
<comment type="subcellular location">
    <subcellularLocation>
        <location evidence="1">Secreted</location>
    </subcellularLocation>
</comment>
<comment type="tissue specificity">
    <text evidence="4">Expressed by the venom gland.</text>
</comment>
<comment type="similarity">
    <text evidence="4">Belongs to the three-finger toxin family. Short-chain subfamily. Type I alpha-neurotoxin sub-subfamily.</text>
</comment>
<keyword id="KW-0008">Acetylcholine receptor inhibiting toxin</keyword>
<keyword id="KW-1015">Disulfide bond</keyword>
<keyword id="KW-0872">Ion channel impairing toxin</keyword>
<keyword id="KW-0528">Neurotoxin</keyword>
<keyword id="KW-0629">Postsynaptic neurotoxin</keyword>
<keyword id="KW-1185">Reference proteome</keyword>
<keyword id="KW-0964">Secreted</keyword>
<keyword id="KW-0732">Signal</keyword>
<keyword id="KW-0800">Toxin</keyword>
<name>3S12_LATLA</name>
<sequence length="83" mass="9287">MKTLLLTLVVVTIVCLDLGYTRRCFNQQSSEPQTNKSCPPGENSCYNKQWRDHRGTITERGCGCPQVKSGIKLTCCQSDDCNN</sequence>
<reference key="1">
    <citation type="submission" date="1998-09" db="EMBL/GenBank/DDBJ databases">
        <title>Classification of sea snakes in genus Laticauda by nucleotide sequences encoding short chain neurotoxins.</title>
        <authorList>
            <person name="Kariya Y."/>
            <person name="Araki S."/>
            <person name="Agu H."/>
            <person name="Tamiya T."/>
            <person name="Tsuchiya T."/>
        </authorList>
    </citation>
    <scope>NUCLEOTIDE SEQUENCE [MRNA]</scope>
    <source>
        <tissue>Venom gland</tissue>
    </source>
</reference>
<feature type="signal peptide" evidence="1">
    <location>
        <begin position="1"/>
        <end position="21"/>
    </location>
</feature>
<feature type="chain" id="PRO_0000035443" description="Short neurotoxin VAN-10">
    <location>
        <begin position="22"/>
        <end position="83"/>
    </location>
</feature>
<feature type="disulfide bond" evidence="2">
    <location>
        <begin position="24"/>
        <end position="45"/>
    </location>
</feature>
<feature type="disulfide bond" evidence="2">
    <location>
        <begin position="38"/>
        <end position="62"/>
    </location>
</feature>
<feature type="disulfide bond" evidence="2">
    <location>
        <begin position="64"/>
        <end position="75"/>
    </location>
</feature>
<feature type="disulfide bond" evidence="2">
    <location>
        <begin position="76"/>
        <end position="81"/>
    </location>
</feature>
<evidence type="ECO:0000250" key="1"/>
<evidence type="ECO:0000250" key="2">
    <source>
        <dbReference type="UniProtKB" id="P0C1Z0"/>
    </source>
</evidence>
<evidence type="ECO:0000250" key="3">
    <source>
        <dbReference type="UniProtKB" id="P60775"/>
    </source>
</evidence>
<evidence type="ECO:0000305" key="4"/>
<protein>
    <recommendedName>
        <fullName>Short neurotoxin VAN-10</fullName>
    </recommendedName>
</protein>